<organism>
    <name type="scientific">Escherichia coli (strain K12)</name>
    <dbReference type="NCBI Taxonomy" id="83333"/>
    <lineage>
        <taxon>Bacteria</taxon>
        <taxon>Pseudomonadati</taxon>
        <taxon>Pseudomonadota</taxon>
        <taxon>Gammaproteobacteria</taxon>
        <taxon>Enterobacterales</taxon>
        <taxon>Enterobacteriaceae</taxon>
        <taxon>Escherichia</taxon>
    </lineage>
</organism>
<proteinExistence type="evidence at protein level"/>
<dbReference type="EMBL" id="U00007">
    <property type="protein sequence ID" value="AAA60508.1"/>
    <property type="molecule type" value="Genomic_DNA"/>
</dbReference>
<dbReference type="EMBL" id="M89774">
    <property type="protein sequence ID" value="AAA17052.1"/>
    <property type="molecule type" value="Genomic_DNA"/>
</dbReference>
<dbReference type="EMBL" id="U00096">
    <property type="protein sequence ID" value="AAC75218.1"/>
    <property type="molecule type" value="Genomic_DNA"/>
</dbReference>
<dbReference type="EMBL" id="AP009048">
    <property type="protein sequence ID" value="BAE76634.1"/>
    <property type="molecule type" value="Genomic_DNA"/>
</dbReference>
<dbReference type="PIR" id="D64984">
    <property type="entry name" value="D64984"/>
</dbReference>
<dbReference type="RefSeq" id="NP_416662.1">
    <property type="nucleotide sequence ID" value="NC_000913.3"/>
</dbReference>
<dbReference type="PDB" id="8SBH">
    <property type="method" value="X-ray"/>
    <property type="resolution" value="1.93 A"/>
    <property type="chains" value="A/B=91-293"/>
</dbReference>
<dbReference type="PDBsum" id="8SBH"/>
<dbReference type="SMR" id="P0ACR4"/>
<dbReference type="BioGRID" id="4261800">
    <property type="interactions" value="130"/>
</dbReference>
<dbReference type="DIP" id="DIP-11918N"/>
<dbReference type="FunCoup" id="P0ACR4">
    <property type="interactions" value="196"/>
</dbReference>
<dbReference type="STRING" id="511145.b2157"/>
<dbReference type="jPOST" id="P0ACR4"/>
<dbReference type="PaxDb" id="511145-b2157"/>
<dbReference type="EnsemblBacteria" id="AAC75218">
    <property type="protein sequence ID" value="AAC75218"/>
    <property type="gene ID" value="b2157"/>
</dbReference>
<dbReference type="GeneID" id="946657"/>
<dbReference type="KEGG" id="ecj:JW2144"/>
<dbReference type="KEGG" id="eco:b2157"/>
<dbReference type="KEGG" id="ecoc:C3026_12090"/>
<dbReference type="PATRIC" id="fig|1411691.4.peg.82"/>
<dbReference type="EchoBASE" id="EB2029"/>
<dbReference type="eggNOG" id="COG0583">
    <property type="taxonomic scope" value="Bacteria"/>
</dbReference>
<dbReference type="HOGENOM" id="CLU_039613_6_1_6"/>
<dbReference type="InParanoid" id="P0ACR4"/>
<dbReference type="OMA" id="KLHVQNT"/>
<dbReference type="OrthoDB" id="9808620at2"/>
<dbReference type="PhylomeDB" id="P0ACR4"/>
<dbReference type="BioCyc" id="EcoCyc:EG12105-MONOMER"/>
<dbReference type="PRO" id="PR:P0ACR4"/>
<dbReference type="Proteomes" id="UP000000625">
    <property type="component" value="Chromosome"/>
</dbReference>
<dbReference type="GO" id="GO:0003700">
    <property type="term" value="F:DNA-binding transcription factor activity"/>
    <property type="evidence" value="ECO:0007669"/>
    <property type="project" value="InterPro"/>
</dbReference>
<dbReference type="GO" id="GO:0000976">
    <property type="term" value="F:transcription cis-regulatory region binding"/>
    <property type="evidence" value="ECO:0000318"/>
    <property type="project" value="GO_Central"/>
</dbReference>
<dbReference type="GO" id="GO:0006351">
    <property type="term" value="P:DNA-templated transcription"/>
    <property type="evidence" value="ECO:0000315"/>
    <property type="project" value="EcoCyc"/>
</dbReference>
<dbReference type="GO" id="GO:0006355">
    <property type="term" value="P:regulation of DNA-templated transcription"/>
    <property type="evidence" value="ECO:0000318"/>
    <property type="project" value="GO_Central"/>
</dbReference>
<dbReference type="CDD" id="cd08420">
    <property type="entry name" value="PBP2_CysL_like"/>
    <property type="match status" value="1"/>
</dbReference>
<dbReference type="FunFam" id="1.10.10.10:FF:000145">
    <property type="entry name" value="LysR family transcriptional regulator"/>
    <property type="match status" value="1"/>
</dbReference>
<dbReference type="FunFam" id="3.40.190.290:FF:000009">
    <property type="entry name" value="LysR family transcriptional regulator"/>
    <property type="match status" value="1"/>
</dbReference>
<dbReference type="Gene3D" id="3.40.190.290">
    <property type="match status" value="1"/>
</dbReference>
<dbReference type="Gene3D" id="1.10.10.10">
    <property type="entry name" value="Winged helix-like DNA-binding domain superfamily/Winged helix DNA-binding domain"/>
    <property type="match status" value="1"/>
</dbReference>
<dbReference type="InterPro" id="IPR005119">
    <property type="entry name" value="LysR_subst-bd"/>
</dbReference>
<dbReference type="InterPro" id="IPR000847">
    <property type="entry name" value="Tscrpt_reg_HTH_LysR"/>
</dbReference>
<dbReference type="InterPro" id="IPR036388">
    <property type="entry name" value="WH-like_DNA-bd_sf"/>
</dbReference>
<dbReference type="InterPro" id="IPR036390">
    <property type="entry name" value="WH_DNA-bd_sf"/>
</dbReference>
<dbReference type="InterPro" id="IPR049752">
    <property type="entry name" value="YeiE"/>
</dbReference>
<dbReference type="NCBIfam" id="NF008095">
    <property type="entry name" value="PRK10837.1"/>
    <property type="match status" value="1"/>
</dbReference>
<dbReference type="NCBIfam" id="NF040889">
    <property type="entry name" value="trans_reg_YeiE"/>
    <property type="match status" value="1"/>
</dbReference>
<dbReference type="PANTHER" id="PTHR30126">
    <property type="entry name" value="HTH-TYPE TRANSCRIPTIONAL REGULATOR"/>
    <property type="match status" value="1"/>
</dbReference>
<dbReference type="PANTHER" id="PTHR30126:SF94">
    <property type="entry name" value="LYSR FAMILY TRANSCRIPTIONAL REGULATOR"/>
    <property type="match status" value="1"/>
</dbReference>
<dbReference type="Pfam" id="PF00126">
    <property type="entry name" value="HTH_1"/>
    <property type="match status" value="1"/>
</dbReference>
<dbReference type="Pfam" id="PF03466">
    <property type="entry name" value="LysR_substrate"/>
    <property type="match status" value="1"/>
</dbReference>
<dbReference type="PRINTS" id="PR00039">
    <property type="entry name" value="HTHLYSR"/>
</dbReference>
<dbReference type="SUPFAM" id="SSF53850">
    <property type="entry name" value="Periplasmic binding protein-like II"/>
    <property type="match status" value="1"/>
</dbReference>
<dbReference type="SUPFAM" id="SSF46785">
    <property type="entry name" value="Winged helix' DNA-binding domain"/>
    <property type="match status" value="1"/>
</dbReference>
<dbReference type="PROSITE" id="PS50931">
    <property type="entry name" value="HTH_LYSR"/>
    <property type="match status" value="1"/>
</dbReference>
<evidence type="ECO:0000255" key="1">
    <source>
        <dbReference type="PROSITE-ProRule" id="PRU00253"/>
    </source>
</evidence>
<evidence type="ECO:0000305" key="2"/>
<evidence type="ECO:0007829" key="3">
    <source>
        <dbReference type="PDB" id="8SBH"/>
    </source>
</evidence>
<reference key="1">
    <citation type="submission" date="1993-10" db="EMBL/GenBank/DDBJ databases">
        <title>Automated multiplex sequencing of the E.coli genome.</title>
        <authorList>
            <person name="Richterich P."/>
            <person name="Lakey N."/>
            <person name="Gryan G."/>
            <person name="Jaehn L."/>
            <person name="Mintz L."/>
            <person name="Robison K."/>
            <person name="Church G.M."/>
        </authorList>
    </citation>
    <scope>NUCLEOTIDE SEQUENCE [LARGE SCALE GENOMIC DNA]</scope>
    <source>
        <strain>K12 / BHB2600</strain>
    </source>
</reference>
<reference key="2">
    <citation type="submission" date="1994-04" db="EMBL/GenBank/DDBJ databases">
        <title>A gene encoding a member of the LysR family of regulatory proteins precedes the lysP gene of Escherichia coli.</title>
        <authorList>
            <person name="Shi W.P."/>
            <person name="Rosen B.P."/>
        </authorList>
    </citation>
    <scope>NUCLEOTIDE SEQUENCE [GENOMIC DNA]</scope>
</reference>
<reference key="3">
    <citation type="journal article" date="1997" name="Science">
        <title>The complete genome sequence of Escherichia coli K-12.</title>
        <authorList>
            <person name="Blattner F.R."/>
            <person name="Plunkett G. III"/>
            <person name="Bloch C.A."/>
            <person name="Perna N.T."/>
            <person name="Burland V."/>
            <person name="Riley M."/>
            <person name="Collado-Vides J."/>
            <person name="Glasner J.D."/>
            <person name="Rode C.K."/>
            <person name="Mayhew G.F."/>
            <person name="Gregor J."/>
            <person name="Davis N.W."/>
            <person name="Kirkpatrick H.A."/>
            <person name="Goeden M.A."/>
            <person name="Rose D.J."/>
            <person name="Mau B."/>
            <person name="Shao Y."/>
        </authorList>
    </citation>
    <scope>NUCLEOTIDE SEQUENCE [LARGE SCALE GENOMIC DNA]</scope>
    <source>
        <strain>K12 / MG1655 / ATCC 47076</strain>
    </source>
</reference>
<reference key="4">
    <citation type="journal article" date="2006" name="Mol. Syst. Biol.">
        <title>Highly accurate genome sequences of Escherichia coli K-12 strains MG1655 and W3110.</title>
        <authorList>
            <person name="Hayashi K."/>
            <person name="Morooka N."/>
            <person name="Yamamoto Y."/>
            <person name="Fujita K."/>
            <person name="Isono K."/>
            <person name="Choi S."/>
            <person name="Ohtsubo E."/>
            <person name="Baba T."/>
            <person name="Wanner B.L."/>
            <person name="Mori H."/>
            <person name="Horiuchi T."/>
        </authorList>
    </citation>
    <scope>NUCLEOTIDE SEQUENCE [LARGE SCALE GENOMIC DNA]</scope>
    <source>
        <strain>K12 / W3110 / ATCC 27325 / DSM 5911</strain>
    </source>
</reference>
<reference key="5">
    <citation type="journal article" date="1992" name="J. Bacteriol.">
        <title>The lysP gene encodes the lysine-specific permease.</title>
        <authorList>
            <person name="Steffes C."/>
            <person name="Ellis J."/>
            <person name="Wu J."/>
            <person name="Rosen B.P."/>
        </authorList>
    </citation>
    <scope>PRELIMINARY NUCLEOTIDE SEQUENCE [GENOMIC DNA] OF 189-293</scope>
    <source>
        <strain>BPR2</strain>
    </source>
</reference>
<keyword id="KW-0002">3D-structure</keyword>
<keyword id="KW-0238">DNA-binding</keyword>
<keyword id="KW-1185">Reference proteome</keyword>
<keyword id="KW-0804">Transcription</keyword>
<keyword id="KW-0805">Transcription regulation</keyword>
<comment type="similarity">
    <text evidence="2">Belongs to the LysR transcriptional regulatory family.</text>
</comment>
<gene>
    <name type="primary">yeiE</name>
    <name type="ordered locus">b2157</name>
    <name type="ordered locus">JW2144</name>
</gene>
<protein>
    <recommendedName>
        <fullName>Uncharacterized HTH-type transcriptional regulator YeiE</fullName>
    </recommendedName>
</protein>
<sequence>MHITLRQLEVFAEVLKSGSTTQASVMLALSQSAVSAALTDLEGQLGVQLFDRVGKRLVVNEHGRLLYPRALALLEQAVEIEQLFREDNGAIRIYASSTIGNYILPAVIARYRHDYPQLPIELSVGNSQDVMQAVLDFRVDIGFIEGPCHSTEIISEPWLEDELVVFAAPTSPLARGPVTLEQLAAAPWILRERGSGTREIVDYLLLSHLPKFEMAMELGNSEAIKHAVRHGLGISCLSRRVIEDQLQAGTLSEVAVPLPRLMRTLWRIHHRQKHLSNALRRFLDYCDPANVPR</sequence>
<name>YEIE_ECOLI</name>
<feature type="chain" id="PRO_0000105788" description="Uncharacterized HTH-type transcriptional regulator YeiE">
    <location>
        <begin position="1"/>
        <end position="293"/>
    </location>
</feature>
<feature type="domain" description="HTH lysR-type" evidence="1">
    <location>
        <begin position="1"/>
        <end position="60"/>
    </location>
</feature>
<feature type="DNA-binding region" description="H-T-H motif" evidence="1">
    <location>
        <begin position="20"/>
        <end position="39"/>
    </location>
</feature>
<feature type="strand" evidence="3">
    <location>
        <begin position="91"/>
        <end position="95"/>
    </location>
</feature>
<feature type="helix" evidence="3">
    <location>
        <begin position="97"/>
        <end position="102"/>
    </location>
</feature>
<feature type="helix" evidence="3">
    <location>
        <begin position="104"/>
        <end position="114"/>
    </location>
</feature>
<feature type="strand" evidence="3">
    <location>
        <begin position="120"/>
        <end position="124"/>
    </location>
</feature>
<feature type="helix" evidence="3">
    <location>
        <begin position="127"/>
        <end position="135"/>
    </location>
</feature>
<feature type="strand" evidence="3">
    <location>
        <begin position="138"/>
        <end position="146"/>
    </location>
</feature>
<feature type="strand" evidence="3">
    <location>
        <begin position="153"/>
        <end position="167"/>
    </location>
</feature>
<feature type="helix" evidence="3">
    <location>
        <begin position="172"/>
        <end position="174"/>
    </location>
</feature>
<feature type="helix" evidence="3">
    <location>
        <begin position="180"/>
        <end position="184"/>
    </location>
</feature>
<feature type="strand" evidence="3">
    <location>
        <begin position="188"/>
        <end position="190"/>
    </location>
</feature>
<feature type="helix" evidence="3">
    <location>
        <begin position="196"/>
        <end position="204"/>
    </location>
</feature>
<feature type="helix" evidence="3">
    <location>
        <begin position="206"/>
        <end position="208"/>
    </location>
</feature>
<feature type="strand" evidence="3">
    <location>
        <begin position="209"/>
        <end position="211"/>
    </location>
</feature>
<feature type="strand" evidence="3">
    <location>
        <begin position="214"/>
        <end position="217"/>
    </location>
</feature>
<feature type="helix" evidence="3">
    <location>
        <begin position="221"/>
        <end position="229"/>
    </location>
</feature>
<feature type="strand" evidence="3">
    <location>
        <begin position="234"/>
        <end position="238"/>
    </location>
</feature>
<feature type="helix" evidence="3">
    <location>
        <begin position="239"/>
        <end position="247"/>
    </location>
</feature>
<feature type="strand" evidence="3">
    <location>
        <begin position="250"/>
        <end position="253"/>
    </location>
</feature>
<feature type="strand" evidence="3">
    <location>
        <begin position="257"/>
        <end position="259"/>
    </location>
</feature>
<feature type="strand" evidence="3">
    <location>
        <begin position="261"/>
        <end position="270"/>
    </location>
</feature>
<feature type="helix" evidence="3">
    <location>
        <begin position="277"/>
        <end position="286"/>
    </location>
</feature>
<accession>P0ACR4</accession>
<accession>P32484</accession>
<accession>Q2MAS2</accession>